<reference key="1">
    <citation type="submission" date="2008-04" db="EMBL/GenBank/DDBJ databases">
        <title>Complete sequence of chromosome 1 of Burkholderia ambifaria MC40-6.</title>
        <authorList>
            <person name="Copeland A."/>
            <person name="Lucas S."/>
            <person name="Lapidus A."/>
            <person name="Glavina del Rio T."/>
            <person name="Dalin E."/>
            <person name="Tice H."/>
            <person name="Pitluck S."/>
            <person name="Chain P."/>
            <person name="Malfatti S."/>
            <person name="Shin M."/>
            <person name="Vergez L."/>
            <person name="Lang D."/>
            <person name="Schmutz J."/>
            <person name="Larimer F."/>
            <person name="Land M."/>
            <person name="Hauser L."/>
            <person name="Kyrpides N."/>
            <person name="Lykidis A."/>
            <person name="Ramette A."/>
            <person name="Konstantinidis K."/>
            <person name="Tiedje J."/>
            <person name="Richardson P."/>
        </authorList>
    </citation>
    <scope>NUCLEOTIDE SEQUENCE [LARGE SCALE GENOMIC DNA]</scope>
    <source>
        <strain>MC40-6</strain>
    </source>
</reference>
<sequence>MALETFVNSEPFTFGVELEIQVVNTHNYDLTKAASDLMRLIQGETFPGNITPEITESMIELSTGICHSHEQAVSELHAIRDVLVKAADQLNVGLCGGGTHAFQQWSDRQIYDAPRFQYISELYGYLAKQFTVFGQHVHIGCPDPDSALFLLHSMSRFIPHFIALSASSPFVQNVDTGFHSARLNSVFAFPLSGRAPFVLTWDSFEEYFTKMVNTGVVNSMKDFYWDIRPKPGYGTIEVRVMDTPLSVDRAAAIACYIQTLARYLLTDRPLKLSEDDYLVYTFNRFEACRFGLEGTCVNPQTGERRTIAEDILDTLDRIAPHAAALGSRAALDEIGALAKARVNDASWLRTVFKQEKSLNETVRQQCLRWRE</sequence>
<name>GCS2_BURA4</name>
<protein>
    <recommendedName>
        <fullName evidence="1">Putative glutamate--cysteine ligase 2</fullName>
        <ecNumber evidence="1">6.3.2.2</ecNumber>
    </recommendedName>
    <alternativeName>
        <fullName evidence="1">Gamma-glutamylcysteine synthetase 2</fullName>
        <shortName evidence="1">GCS 2</shortName>
        <shortName evidence="1">Gamma-GCS 2</shortName>
    </alternativeName>
</protein>
<feature type="chain" id="PRO_1000148206" description="Putative glutamate--cysteine ligase 2">
    <location>
        <begin position="1"/>
        <end position="371"/>
    </location>
</feature>
<organism>
    <name type="scientific">Burkholderia ambifaria (strain MC40-6)</name>
    <dbReference type="NCBI Taxonomy" id="398577"/>
    <lineage>
        <taxon>Bacteria</taxon>
        <taxon>Pseudomonadati</taxon>
        <taxon>Pseudomonadota</taxon>
        <taxon>Betaproteobacteria</taxon>
        <taxon>Burkholderiales</taxon>
        <taxon>Burkholderiaceae</taxon>
        <taxon>Burkholderia</taxon>
        <taxon>Burkholderia cepacia complex</taxon>
    </lineage>
</organism>
<comment type="function">
    <text evidence="1">ATP-dependent carboxylate-amine ligase which exhibits weak glutamate--cysteine ligase activity.</text>
</comment>
<comment type="catalytic activity">
    <reaction evidence="1">
        <text>L-cysteine + L-glutamate + ATP = gamma-L-glutamyl-L-cysteine + ADP + phosphate + H(+)</text>
        <dbReference type="Rhea" id="RHEA:13285"/>
        <dbReference type="ChEBI" id="CHEBI:15378"/>
        <dbReference type="ChEBI" id="CHEBI:29985"/>
        <dbReference type="ChEBI" id="CHEBI:30616"/>
        <dbReference type="ChEBI" id="CHEBI:35235"/>
        <dbReference type="ChEBI" id="CHEBI:43474"/>
        <dbReference type="ChEBI" id="CHEBI:58173"/>
        <dbReference type="ChEBI" id="CHEBI:456216"/>
        <dbReference type="EC" id="6.3.2.2"/>
    </reaction>
</comment>
<comment type="similarity">
    <text evidence="1">Belongs to the glutamate--cysteine ligase type 2 family. YbdK subfamily.</text>
</comment>
<accession>B1YQ56</accession>
<keyword id="KW-0067">ATP-binding</keyword>
<keyword id="KW-0436">Ligase</keyword>
<keyword id="KW-0547">Nucleotide-binding</keyword>
<evidence type="ECO:0000255" key="1">
    <source>
        <dbReference type="HAMAP-Rule" id="MF_01609"/>
    </source>
</evidence>
<proteinExistence type="inferred from homology"/>
<gene>
    <name type="ordered locus">BamMC406_0068</name>
</gene>
<dbReference type="EC" id="6.3.2.2" evidence="1"/>
<dbReference type="EMBL" id="CP001025">
    <property type="protein sequence ID" value="ACB62570.1"/>
    <property type="molecule type" value="Genomic_DNA"/>
</dbReference>
<dbReference type="RefSeq" id="WP_006751345.1">
    <property type="nucleotide sequence ID" value="NC_010551.1"/>
</dbReference>
<dbReference type="SMR" id="B1YQ56"/>
<dbReference type="KEGG" id="bac:BamMC406_0068"/>
<dbReference type="HOGENOM" id="CLU_044848_1_1_4"/>
<dbReference type="OrthoDB" id="9769628at2"/>
<dbReference type="Proteomes" id="UP000001680">
    <property type="component" value="Chromosome 1"/>
</dbReference>
<dbReference type="GO" id="GO:0005524">
    <property type="term" value="F:ATP binding"/>
    <property type="evidence" value="ECO:0007669"/>
    <property type="project" value="UniProtKB-KW"/>
</dbReference>
<dbReference type="GO" id="GO:0004357">
    <property type="term" value="F:glutamate-cysteine ligase activity"/>
    <property type="evidence" value="ECO:0007669"/>
    <property type="project" value="UniProtKB-EC"/>
</dbReference>
<dbReference type="GO" id="GO:0042398">
    <property type="term" value="P:modified amino acid biosynthetic process"/>
    <property type="evidence" value="ECO:0007669"/>
    <property type="project" value="InterPro"/>
</dbReference>
<dbReference type="Gene3D" id="3.30.590.20">
    <property type="match status" value="1"/>
</dbReference>
<dbReference type="HAMAP" id="MF_01609">
    <property type="entry name" value="Glu_cys_ligase_2"/>
    <property type="match status" value="1"/>
</dbReference>
<dbReference type="InterPro" id="IPR050141">
    <property type="entry name" value="GCL_type2/YbdK_subfam"/>
</dbReference>
<dbReference type="InterPro" id="IPR006336">
    <property type="entry name" value="GCS2"/>
</dbReference>
<dbReference type="InterPro" id="IPR014746">
    <property type="entry name" value="Gln_synth/guanido_kin_cat_dom"/>
</dbReference>
<dbReference type="InterPro" id="IPR011793">
    <property type="entry name" value="YbdK"/>
</dbReference>
<dbReference type="NCBIfam" id="TIGR02050">
    <property type="entry name" value="gshA_cyan_rel"/>
    <property type="match status" value="1"/>
</dbReference>
<dbReference type="NCBIfam" id="NF010040">
    <property type="entry name" value="PRK13516.1"/>
    <property type="match status" value="1"/>
</dbReference>
<dbReference type="PANTHER" id="PTHR36510">
    <property type="entry name" value="GLUTAMATE--CYSTEINE LIGASE 2-RELATED"/>
    <property type="match status" value="1"/>
</dbReference>
<dbReference type="PANTHER" id="PTHR36510:SF1">
    <property type="entry name" value="GLUTAMATE--CYSTEINE LIGASE 2-RELATED"/>
    <property type="match status" value="1"/>
</dbReference>
<dbReference type="Pfam" id="PF04107">
    <property type="entry name" value="GCS2"/>
    <property type="match status" value="1"/>
</dbReference>
<dbReference type="SUPFAM" id="SSF55931">
    <property type="entry name" value="Glutamine synthetase/guanido kinase"/>
    <property type="match status" value="1"/>
</dbReference>